<gene>
    <name evidence="1" type="primary">metN1</name>
    <name type="ordered locus">LMOf2365_0304</name>
</gene>
<evidence type="ECO:0000255" key="1">
    <source>
        <dbReference type="HAMAP-Rule" id="MF_01719"/>
    </source>
</evidence>
<name>METN1_LISMF</name>
<accession>Q724C0</accession>
<keyword id="KW-0029">Amino-acid transport</keyword>
<keyword id="KW-0067">ATP-binding</keyword>
<keyword id="KW-1003">Cell membrane</keyword>
<keyword id="KW-0472">Membrane</keyword>
<keyword id="KW-0547">Nucleotide-binding</keyword>
<keyword id="KW-1278">Translocase</keyword>
<keyword id="KW-0813">Transport</keyword>
<dbReference type="EC" id="7.4.2.11" evidence="1"/>
<dbReference type="EMBL" id="AE017262">
    <property type="protein sequence ID" value="AAT03091.1"/>
    <property type="molecule type" value="Genomic_DNA"/>
</dbReference>
<dbReference type="RefSeq" id="WP_003731065.1">
    <property type="nucleotide sequence ID" value="NC_002973.6"/>
</dbReference>
<dbReference type="SMR" id="Q724C0"/>
<dbReference type="KEGG" id="lmf:LMOf2365_0304"/>
<dbReference type="HOGENOM" id="CLU_000604_1_3_9"/>
<dbReference type="GO" id="GO:0005886">
    <property type="term" value="C:plasma membrane"/>
    <property type="evidence" value="ECO:0007669"/>
    <property type="project" value="UniProtKB-SubCell"/>
</dbReference>
<dbReference type="GO" id="GO:0033232">
    <property type="term" value="F:ABC-type D-methionine transporter activity"/>
    <property type="evidence" value="ECO:0007669"/>
    <property type="project" value="UniProtKB-EC"/>
</dbReference>
<dbReference type="GO" id="GO:0005524">
    <property type="term" value="F:ATP binding"/>
    <property type="evidence" value="ECO:0007669"/>
    <property type="project" value="UniProtKB-KW"/>
</dbReference>
<dbReference type="GO" id="GO:0016887">
    <property type="term" value="F:ATP hydrolysis activity"/>
    <property type="evidence" value="ECO:0007669"/>
    <property type="project" value="InterPro"/>
</dbReference>
<dbReference type="CDD" id="cd03258">
    <property type="entry name" value="ABC_MetN_methionine_transporter"/>
    <property type="match status" value="1"/>
</dbReference>
<dbReference type="FunFam" id="3.40.50.300:FF:000056">
    <property type="entry name" value="Cell division ATP-binding protein FtsE"/>
    <property type="match status" value="1"/>
</dbReference>
<dbReference type="Gene3D" id="3.30.70.260">
    <property type="match status" value="1"/>
</dbReference>
<dbReference type="Gene3D" id="3.40.50.300">
    <property type="entry name" value="P-loop containing nucleotide triphosphate hydrolases"/>
    <property type="match status" value="1"/>
</dbReference>
<dbReference type="InterPro" id="IPR003593">
    <property type="entry name" value="AAA+_ATPase"/>
</dbReference>
<dbReference type="InterPro" id="IPR003439">
    <property type="entry name" value="ABC_transporter-like_ATP-bd"/>
</dbReference>
<dbReference type="InterPro" id="IPR017871">
    <property type="entry name" value="ABC_transporter-like_CS"/>
</dbReference>
<dbReference type="InterPro" id="IPR045865">
    <property type="entry name" value="ACT-like_dom_sf"/>
</dbReference>
<dbReference type="InterPro" id="IPR041701">
    <property type="entry name" value="MetN_ABC"/>
</dbReference>
<dbReference type="InterPro" id="IPR050086">
    <property type="entry name" value="MetN_ABC_transporter-like"/>
</dbReference>
<dbReference type="InterPro" id="IPR018449">
    <property type="entry name" value="NIL_domain"/>
</dbReference>
<dbReference type="InterPro" id="IPR027417">
    <property type="entry name" value="P-loop_NTPase"/>
</dbReference>
<dbReference type="PANTHER" id="PTHR43166">
    <property type="entry name" value="AMINO ACID IMPORT ATP-BINDING PROTEIN"/>
    <property type="match status" value="1"/>
</dbReference>
<dbReference type="PANTHER" id="PTHR43166:SF30">
    <property type="entry name" value="METHIONINE IMPORT ATP-BINDING PROTEIN METN"/>
    <property type="match status" value="1"/>
</dbReference>
<dbReference type="Pfam" id="PF00005">
    <property type="entry name" value="ABC_tran"/>
    <property type="match status" value="1"/>
</dbReference>
<dbReference type="Pfam" id="PF09383">
    <property type="entry name" value="NIL"/>
    <property type="match status" value="1"/>
</dbReference>
<dbReference type="SMART" id="SM00382">
    <property type="entry name" value="AAA"/>
    <property type="match status" value="1"/>
</dbReference>
<dbReference type="SMART" id="SM00930">
    <property type="entry name" value="NIL"/>
    <property type="match status" value="1"/>
</dbReference>
<dbReference type="SUPFAM" id="SSF55021">
    <property type="entry name" value="ACT-like"/>
    <property type="match status" value="1"/>
</dbReference>
<dbReference type="SUPFAM" id="SSF52540">
    <property type="entry name" value="P-loop containing nucleoside triphosphate hydrolases"/>
    <property type="match status" value="1"/>
</dbReference>
<dbReference type="PROSITE" id="PS00211">
    <property type="entry name" value="ABC_TRANSPORTER_1"/>
    <property type="match status" value="1"/>
</dbReference>
<dbReference type="PROSITE" id="PS50893">
    <property type="entry name" value="ABC_TRANSPORTER_2"/>
    <property type="match status" value="1"/>
</dbReference>
<dbReference type="PROSITE" id="PS51264">
    <property type="entry name" value="METN"/>
    <property type="match status" value="1"/>
</dbReference>
<sequence>MIELHQVSKSFNVNGKTVEAVKNVSITVEKGEIFGVVGYSGAGKSTLVRCINLLERPDAGQVVIDGKNLSTLSSKELRVARRKIGMIFQGYNLLKTATVYDNIAKPLKLEGVPKDEIETRVNKYLSIVGLEDKRNNYPSQLSGGQKQRVAIARALAHEPEILLSDEATSALDPETTEAILQLLLKINAELGITIFLITHELDVIQRICDRVAVMENGHLVEQGTVLDIFTKAKHATTKRFVGSEASFDIPQDLLEKYVATGKLVSLHFIGDEADEPALALVSRKFDVLPSILAGGIDHLKNGTLGKLLVHLKGDEVEYSKAISYLKESGVVVEEVELL</sequence>
<organism>
    <name type="scientific">Listeria monocytogenes serotype 4b (strain F2365)</name>
    <dbReference type="NCBI Taxonomy" id="265669"/>
    <lineage>
        <taxon>Bacteria</taxon>
        <taxon>Bacillati</taxon>
        <taxon>Bacillota</taxon>
        <taxon>Bacilli</taxon>
        <taxon>Bacillales</taxon>
        <taxon>Listeriaceae</taxon>
        <taxon>Listeria</taxon>
    </lineage>
</organism>
<feature type="chain" id="PRO_0000270330" description="Methionine import ATP-binding protein MetN 1">
    <location>
        <begin position="1"/>
        <end position="338"/>
    </location>
</feature>
<feature type="domain" description="ABC transporter" evidence="1">
    <location>
        <begin position="2"/>
        <end position="241"/>
    </location>
</feature>
<feature type="binding site" evidence="1">
    <location>
        <begin position="38"/>
        <end position="45"/>
    </location>
    <ligand>
        <name>ATP</name>
        <dbReference type="ChEBI" id="CHEBI:30616"/>
    </ligand>
</feature>
<comment type="function">
    <text evidence="1">Part of the ABC transporter complex MetNIQ involved in methionine import. Responsible for energy coupling to the transport system.</text>
</comment>
<comment type="catalytic activity">
    <reaction evidence="1">
        <text>L-methionine(out) + ATP + H2O = L-methionine(in) + ADP + phosphate + H(+)</text>
        <dbReference type="Rhea" id="RHEA:29779"/>
        <dbReference type="ChEBI" id="CHEBI:15377"/>
        <dbReference type="ChEBI" id="CHEBI:15378"/>
        <dbReference type="ChEBI" id="CHEBI:30616"/>
        <dbReference type="ChEBI" id="CHEBI:43474"/>
        <dbReference type="ChEBI" id="CHEBI:57844"/>
        <dbReference type="ChEBI" id="CHEBI:456216"/>
        <dbReference type="EC" id="7.4.2.11"/>
    </reaction>
</comment>
<comment type="catalytic activity">
    <reaction evidence="1">
        <text>D-methionine(out) + ATP + H2O = D-methionine(in) + ADP + phosphate + H(+)</text>
        <dbReference type="Rhea" id="RHEA:29767"/>
        <dbReference type="ChEBI" id="CHEBI:15377"/>
        <dbReference type="ChEBI" id="CHEBI:15378"/>
        <dbReference type="ChEBI" id="CHEBI:30616"/>
        <dbReference type="ChEBI" id="CHEBI:43474"/>
        <dbReference type="ChEBI" id="CHEBI:57932"/>
        <dbReference type="ChEBI" id="CHEBI:456216"/>
        <dbReference type="EC" id="7.4.2.11"/>
    </reaction>
</comment>
<comment type="subunit">
    <text evidence="1">The complex is composed of two ATP-binding proteins (MetN), two transmembrane proteins (MetI) and a solute-binding protein (MetQ).</text>
</comment>
<comment type="subcellular location">
    <subcellularLocation>
        <location evidence="1">Cell membrane</location>
        <topology evidence="1">Peripheral membrane protein</topology>
    </subcellularLocation>
</comment>
<comment type="similarity">
    <text evidence="1">Belongs to the ABC transporter superfamily. Methionine importer (TC 3.A.1.24) family.</text>
</comment>
<protein>
    <recommendedName>
        <fullName evidence="1">Methionine import ATP-binding protein MetN 1</fullName>
        <ecNumber evidence="1">7.4.2.11</ecNumber>
    </recommendedName>
</protein>
<reference key="1">
    <citation type="journal article" date="2004" name="Nucleic Acids Res.">
        <title>Whole genome comparisons of serotype 4b and 1/2a strains of the food-borne pathogen Listeria monocytogenes reveal new insights into the core genome components of this species.</title>
        <authorList>
            <person name="Nelson K.E."/>
            <person name="Fouts D.E."/>
            <person name="Mongodin E.F."/>
            <person name="Ravel J."/>
            <person name="DeBoy R.T."/>
            <person name="Kolonay J.F."/>
            <person name="Rasko D.A."/>
            <person name="Angiuoli S.V."/>
            <person name="Gill S.R."/>
            <person name="Paulsen I.T."/>
            <person name="Peterson J.D."/>
            <person name="White O."/>
            <person name="Nelson W.C."/>
            <person name="Nierman W.C."/>
            <person name="Beanan M.J."/>
            <person name="Brinkac L.M."/>
            <person name="Daugherty S.C."/>
            <person name="Dodson R.J."/>
            <person name="Durkin A.S."/>
            <person name="Madupu R."/>
            <person name="Haft D.H."/>
            <person name="Selengut J."/>
            <person name="Van Aken S.E."/>
            <person name="Khouri H.M."/>
            <person name="Fedorova N."/>
            <person name="Forberger H.A."/>
            <person name="Tran B."/>
            <person name="Kathariou S."/>
            <person name="Wonderling L.D."/>
            <person name="Uhlich G.A."/>
            <person name="Bayles D.O."/>
            <person name="Luchansky J.B."/>
            <person name="Fraser C.M."/>
        </authorList>
    </citation>
    <scope>NUCLEOTIDE SEQUENCE [LARGE SCALE GENOMIC DNA]</scope>
    <source>
        <strain>F2365</strain>
    </source>
</reference>
<proteinExistence type="inferred from homology"/>